<dbReference type="EMBL" id="M12132">
    <property type="protein sequence ID" value="AAB00122.1"/>
    <property type="molecule type" value="Genomic_DNA"/>
</dbReference>
<dbReference type="PIR" id="A23569">
    <property type="entry name" value="A23569"/>
</dbReference>
<dbReference type="BMRB" id="P68247"/>
<dbReference type="SMR" id="P68247"/>
<dbReference type="Proteomes" id="UP000694412">
    <property type="component" value="Unplaced"/>
</dbReference>
<dbReference type="GO" id="GO:0005861">
    <property type="term" value="C:troponin complex"/>
    <property type="evidence" value="ECO:0007669"/>
    <property type="project" value="InterPro"/>
</dbReference>
<dbReference type="GO" id="GO:0003779">
    <property type="term" value="F:actin binding"/>
    <property type="evidence" value="ECO:0007669"/>
    <property type="project" value="UniProtKB-KW"/>
</dbReference>
<dbReference type="GO" id="GO:0060048">
    <property type="term" value="P:cardiac muscle contraction"/>
    <property type="evidence" value="ECO:0007669"/>
    <property type="project" value="TreeGrafter"/>
</dbReference>
<dbReference type="GO" id="GO:0003009">
    <property type="term" value="P:skeletal muscle contraction"/>
    <property type="evidence" value="ECO:0007669"/>
    <property type="project" value="TreeGrafter"/>
</dbReference>
<dbReference type="FunFam" id="1.20.5.350:FF:000002">
    <property type="entry name" value="troponin I, fast skeletal muscle"/>
    <property type="match status" value="1"/>
</dbReference>
<dbReference type="Gene3D" id="1.20.5.350">
    <property type="match status" value="1"/>
</dbReference>
<dbReference type="Gene3D" id="6.10.250.180">
    <property type="match status" value="1"/>
</dbReference>
<dbReference type="InterPro" id="IPR001978">
    <property type="entry name" value="Troponin"/>
</dbReference>
<dbReference type="InterPro" id="IPR050875">
    <property type="entry name" value="Troponin_I"/>
</dbReference>
<dbReference type="InterPro" id="IPR038077">
    <property type="entry name" value="Troponin_sf"/>
</dbReference>
<dbReference type="PANTHER" id="PTHR13738">
    <property type="entry name" value="TROPONIN I"/>
    <property type="match status" value="1"/>
</dbReference>
<dbReference type="PANTHER" id="PTHR13738:SF15">
    <property type="entry name" value="TROPONIN I, FAST SKELETAL MUSCLE"/>
    <property type="match status" value="1"/>
</dbReference>
<dbReference type="Pfam" id="PF00992">
    <property type="entry name" value="Troponin"/>
    <property type="match status" value="1"/>
</dbReference>
<dbReference type="SUPFAM" id="SSF90250">
    <property type="entry name" value="Troponin coil-coiled subunits"/>
    <property type="match status" value="1"/>
</dbReference>
<comment type="function">
    <text>Troponin I is the inhibitory subunit of troponin, the thin filament regulatory complex which confers calcium-sensitivity to striated muscle actomyosin ATPase activity.</text>
</comment>
<comment type="subunit">
    <text>Binds to actin and tropomyosin.</text>
</comment>
<comment type="PTM">
    <text>The N-terminus is blocked.</text>
</comment>
<comment type="similarity">
    <text evidence="2">Belongs to the troponin I family.</text>
</comment>
<name>TNNI2_COTJA</name>
<protein>
    <recommendedName>
        <fullName>Troponin I, fast skeletal muscle</fullName>
    </recommendedName>
    <alternativeName>
        <fullName>Troponin I, fast-twitch isoform</fullName>
    </alternativeName>
</protein>
<keyword id="KW-0007">Acetylation</keyword>
<keyword id="KW-0009">Actin-binding</keyword>
<keyword id="KW-0514">Muscle protein</keyword>
<keyword id="KW-1185">Reference proteome</keyword>
<evidence type="ECO:0000250" key="1"/>
<evidence type="ECO:0000305" key="2"/>
<proteinExistence type="inferred from homology"/>
<organism>
    <name type="scientific">Coturnix japonica</name>
    <name type="common">Japanese quail</name>
    <name type="synonym">Coturnix coturnix japonica</name>
    <dbReference type="NCBI Taxonomy" id="93934"/>
    <lineage>
        <taxon>Eukaryota</taxon>
        <taxon>Metazoa</taxon>
        <taxon>Chordata</taxon>
        <taxon>Craniata</taxon>
        <taxon>Vertebrata</taxon>
        <taxon>Euteleostomi</taxon>
        <taxon>Archelosauria</taxon>
        <taxon>Archosauria</taxon>
        <taxon>Dinosauria</taxon>
        <taxon>Saurischia</taxon>
        <taxon>Theropoda</taxon>
        <taxon>Coelurosauria</taxon>
        <taxon>Aves</taxon>
        <taxon>Neognathae</taxon>
        <taxon>Galloanserae</taxon>
        <taxon>Galliformes</taxon>
        <taxon>Phasianidae</taxon>
        <taxon>Perdicinae</taxon>
        <taxon>Coturnix</taxon>
    </lineage>
</organism>
<gene>
    <name type="primary">TNNI2</name>
</gene>
<feature type="initiator methionine" description="Removed" evidence="1">
    <location>
        <position position="1"/>
    </location>
</feature>
<feature type="chain" id="PRO_0000186148" description="Troponin I, fast skeletal muscle">
    <location>
        <begin position="2"/>
        <end position="183"/>
    </location>
</feature>
<feature type="region of interest" description="Involved in binding TNC">
    <location>
        <begin position="2"/>
        <end position="48"/>
    </location>
</feature>
<feature type="region of interest" description="Involved in binding TNC and actin">
    <location>
        <begin position="97"/>
        <end position="117"/>
    </location>
</feature>
<feature type="modified residue" description="N-acetylserine" evidence="1">
    <location>
        <position position="2"/>
    </location>
</feature>
<sequence length="183" mass="21234">MSDEEKKRRAATARRQHLKSAMLQLAVTEIEKEAAAKEVEKQNYLAEHCPPLSLPGSMQELQELCKKLHAKIDSVDEERYDTEVKLQKTNKELEDLSQKLFDLRGKFKRPPLRRVRMSADAMLRALLGSKHKVNMDLRANLKQVKKEDTEKEKDLRDVGDWRKNIEEKSGMEGRKKMFEAGES</sequence>
<accession>P68247</accession>
<accession>P02644</accession>
<reference key="1">
    <citation type="journal article" date="1985" name="Proc. Natl. Acad. Sci. U.S.A.">
        <title>Structure, evolution, and regulation of a fast skeletal muscle troponin I gene.</title>
        <authorList>
            <person name="Baldwin A.S. Jr."/>
            <person name="Kittler E.L.W."/>
            <person name="Emerson C.P. Jr."/>
        </authorList>
    </citation>
    <scope>NUCLEOTIDE SEQUENCE [GENOMIC DNA]</scope>
</reference>